<gene>
    <name evidence="12" type="primary">CDC45</name>
    <name type="synonym">CDC45L</name>
    <name type="synonym">CDC45L2</name>
    <name type="ORF">UNQ374/PRO710</name>
</gene>
<accession>O75419</accession>
<accession>B4DDB4</accession>
<accession>B4DDU3</accession>
<accession>E9PDH7</accession>
<accession>O60856</accession>
<accession>Q20WK8</accession>
<accession>Q6UW54</accession>
<accession>Q9UP68</accession>
<dbReference type="EMBL" id="AF062495">
    <property type="protein sequence ID" value="AAC67521.1"/>
    <property type="molecule type" value="mRNA"/>
</dbReference>
<dbReference type="EMBL" id="AF053074">
    <property type="protein sequence ID" value="AAC27289.1"/>
    <property type="molecule type" value="mRNA"/>
</dbReference>
<dbReference type="EMBL" id="AJ223728">
    <property type="protein sequence ID" value="CAA11530.1"/>
    <property type="molecule type" value="mRNA"/>
</dbReference>
<dbReference type="EMBL" id="AF081535">
    <property type="protein sequence ID" value="AAD08998.1"/>
    <property type="molecule type" value="mRNA"/>
</dbReference>
<dbReference type="EMBL" id="AY358971">
    <property type="protein sequence ID" value="AAQ89330.1"/>
    <property type="molecule type" value="mRNA"/>
</dbReference>
<dbReference type="EMBL" id="AK293123">
    <property type="protein sequence ID" value="BAG56675.1"/>
    <property type="molecule type" value="mRNA"/>
</dbReference>
<dbReference type="EMBL" id="AK293338">
    <property type="protein sequence ID" value="BAG56854.1"/>
    <property type="molecule type" value="mRNA"/>
</dbReference>
<dbReference type="EMBL" id="BT006792">
    <property type="protein sequence ID" value="AAP35438.1"/>
    <property type="molecule type" value="mRNA"/>
</dbReference>
<dbReference type="EMBL" id="AY572790">
    <property type="protein sequence ID" value="AAS66985.1"/>
    <property type="molecule type" value="Genomic_DNA"/>
</dbReference>
<dbReference type="EMBL" id="CT841513">
    <property type="protein sequence ID" value="CAJ86443.1"/>
    <property type="molecule type" value="mRNA"/>
</dbReference>
<dbReference type="EMBL" id="AC000082">
    <property type="status" value="NOT_ANNOTATED_CDS"/>
    <property type="molecule type" value="Genomic_DNA"/>
</dbReference>
<dbReference type="EMBL" id="AC000087">
    <property type="status" value="NOT_ANNOTATED_CDS"/>
    <property type="molecule type" value="Genomic_DNA"/>
</dbReference>
<dbReference type="EMBL" id="AC000088">
    <property type="status" value="NOT_ANNOTATED_CDS"/>
    <property type="molecule type" value="Genomic_DNA"/>
</dbReference>
<dbReference type="EMBL" id="CH471176">
    <property type="protein sequence ID" value="EAX03036.1"/>
    <property type="molecule type" value="Genomic_DNA"/>
</dbReference>
<dbReference type="EMBL" id="BC006232">
    <property type="protein sequence ID" value="AAH06232.1"/>
    <property type="molecule type" value="mRNA"/>
</dbReference>
<dbReference type="EMBL" id="BC010022">
    <property type="protein sequence ID" value="AAH10022.1"/>
    <property type="molecule type" value="mRNA"/>
</dbReference>
<dbReference type="CCDS" id="CCDS13762.1">
    <molecule id="O75419-1"/>
</dbReference>
<dbReference type="CCDS" id="CCDS54499.1">
    <molecule id="O75419-3"/>
</dbReference>
<dbReference type="CCDS" id="CCDS54500.1">
    <molecule id="O75419-2"/>
</dbReference>
<dbReference type="RefSeq" id="NP_001171481.1">
    <molecule id="O75419-3"/>
    <property type="nucleotide sequence ID" value="NM_001178010.2"/>
</dbReference>
<dbReference type="RefSeq" id="NP_001171482.1">
    <molecule id="O75419-2"/>
    <property type="nucleotide sequence ID" value="NM_001178011.2"/>
</dbReference>
<dbReference type="RefSeq" id="NP_003495.1">
    <molecule id="O75419-1"/>
    <property type="nucleotide sequence ID" value="NM_003504.5"/>
</dbReference>
<dbReference type="RefSeq" id="XP_005261342.1">
    <property type="nucleotide sequence ID" value="XM_005261285.2"/>
</dbReference>
<dbReference type="RefSeq" id="XP_011528717.1">
    <property type="nucleotide sequence ID" value="XM_011530415.1"/>
</dbReference>
<dbReference type="RefSeq" id="XP_011528720.1">
    <molecule id="O75419-2"/>
    <property type="nucleotide sequence ID" value="XM_011530418.4"/>
</dbReference>
<dbReference type="RefSeq" id="XP_047297488.1">
    <molecule id="O75419-1"/>
    <property type="nucleotide sequence ID" value="XM_047441532.1"/>
</dbReference>
<dbReference type="RefSeq" id="XP_047297490.1">
    <molecule id="O75419-3"/>
    <property type="nucleotide sequence ID" value="XM_047441534.1"/>
</dbReference>
<dbReference type="RefSeq" id="XP_054181966.1">
    <molecule id="O75419-1"/>
    <property type="nucleotide sequence ID" value="XM_054325991.1"/>
</dbReference>
<dbReference type="RefSeq" id="XP_054181969.1">
    <molecule id="O75419-2"/>
    <property type="nucleotide sequence ID" value="XM_054325994.1"/>
</dbReference>
<dbReference type="RefSeq" id="XP_054181972.1">
    <molecule id="O75419-3"/>
    <property type="nucleotide sequence ID" value="XM_054325997.1"/>
</dbReference>
<dbReference type="PDB" id="5DGO">
    <property type="method" value="X-ray"/>
    <property type="resolution" value="2.10 A"/>
    <property type="chains" value="A=1-566"/>
</dbReference>
<dbReference type="PDB" id="6XTX">
    <property type="method" value="EM"/>
    <property type="resolution" value="3.29 A"/>
    <property type="chains" value="E=1-566"/>
</dbReference>
<dbReference type="PDB" id="6XTY">
    <property type="method" value="EM"/>
    <property type="resolution" value="6.77 A"/>
    <property type="chains" value="E=1-566"/>
</dbReference>
<dbReference type="PDB" id="7PFO">
    <property type="method" value="EM"/>
    <property type="resolution" value="3.20 A"/>
    <property type="chains" value="C=1-566"/>
</dbReference>
<dbReference type="PDB" id="7PLO">
    <property type="method" value="EM"/>
    <property type="resolution" value="2.80 A"/>
    <property type="chains" value="C=1-566"/>
</dbReference>
<dbReference type="PDBsum" id="5DGO"/>
<dbReference type="PDBsum" id="6XTX"/>
<dbReference type="PDBsum" id="6XTY"/>
<dbReference type="PDBsum" id="7PFO"/>
<dbReference type="PDBsum" id="7PLO"/>
<dbReference type="EMDB" id="EMD-10619"/>
<dbReference type="EMDB" id="EMD-10621"/>
<dbReference type="EMDB" id="EMD-13375"/>
<dbReference type="EMDB" id="EMD-13494"/>
<dbReference type="SMR" id="O75419"/>
<dbReference type="BioGRID" id="113915">
    <property type="interactions" value="138"/>
</dbReference>
<dbReference type="ComplexPortal" id="CPX-4526">
    <property type="entry name" value="CMG helicase complex"/>
</dbReference>
<dbReference type="DIP" id="DIP-31725N"/>
<dbReference type="FunCoup" id="O75419">
    <property type="interactions" value="1704"/>
</dbReference>
<dbReference type="IntAct" id="O75419">
    <property type="interactions" value="91"/>
</dbReference>
<dbReference type="MINT" id="O75419"/>
<dbReference type="STRING" id="9606.ENSP00000405726"/>
<dbReference type="BindingDB" id="O75419"/>
<dbReference type="ChEMBL" id="CHEMBL3040"/>
<dbReference type="GlyGen" id="O75419">
    <property type="glycosylation" value="1 site, 1 O-linked glycan (1 site)"/>
</dbReference>
<dbReference type="iPTMnet" id="O75419"/>
<dbReference type="MetOSite" id="O75419"/>
<dbReference type="PhosphoSitePlus" id="O75419"/>
<dbReference type="BioMuta" id="CDC45"/>
<dbReference type="jPOST" id="O75419"/>
<dbReference type="MassIVE" id="O75419"/>
<dbReference type="PaxDb" id="9606-ENSP00000405726"/>
<dbReference type="PeptideAtlas" id="O75419"/>
<dbReference type="ProteomicsDB" id="19667"/>
<dbReference type="ProteomicsDB" id="49990">
    <molecule id="O75419-1"/>
</dbReference>
<dbReference type="ProteomicsDB" id="49991">
    <molecule id="O75419-2"/>
</dbReference>
<dbReference type="Pumba" id="O75419"/>
<dbReference type="Antibodypedia" id="262">
    <property type="antibodies" value="374 antibodies from 37 providers"/>
</dbReference>
<dbReference type="DNASU" id="8318"/>
<dbReference type="Ensembl" id="ENST00000263201.7">
    <molecule id="O75419-1"/>
    <property type="protein sequence ID" value="ENSP00000263201.2"/>
    <property type="gene ID" value="ENSG00000093009.11"/>
</dbReference>
<dbReference type="Ensembl" id="ENST00000404724.7">
    <molecule id="O75419-2"/>
    <property type="protein sequence ID" value="ENSP00000384978.3"/>
    <property type="gene ID" value="ENSG00000093009.11"/>
</dbReference>
<dbReference type="Ensembl" id="ENST00000437685.6">
    <molecule id="O75419-3"/>
    <property type="protein sequence ID" value="ENSP00000405726.2"/>
    <property type="gene ID" value="ENSG00000093009.11"/>
</dbReference>
<dbReference type="GeneID" id="8318"/>
<dbReference type="KEGG" id="hsa:8318"/>
<dbReference type="MANE-Select" id="ENST00000263201.7">
    <property type="protein sequence ID" value="ENSP00000263201.2"/>
    <property type="RefSeq nucleotide sequence ID" value="NM_003504.5"/>
    <property type="RefSeq protein sequence ID" value="NP_003495.1"/>
</dbReference>
<dbReference type="UCSC" id="uc002zpr.5">
    <molecule id="O75419-1"/>
    <property type="organism name" value="human"/>
</dbReference>
<dbReference type="AGR" id="HGNC:1739"/>
<dbReference type="CTD" id="8318"/>
<dbReference type="DisGeNET" id="8318"/>
<dbReference type="GeneCards" id="CDC45"/>
<dbReference type="HGNC" id="HGNC:1739">
    <property type="gene designation" value="CDC45"/>
</dbReference>
<dbReference type="HPA" id="ENSG00000093009">
    <property type="expression patterns" value="Tissue enhanced (bone marrow, lymphoid tissue, testis)"/>
</dbReference>
<dbReference type="MalaCards" id="CDC45"/>
<dbReference type="MIM" id="603465">
    <property type="type" value="gene"/>
</dbReference>
<dbReference type="MIM" id="617063">
    <property type="type" value="phenotype"/>
</dbReference>
<dbReference type="neXtProt" id="NX_O75419"/>
<dbReference type="OpenTargets" id="ENSG00000093009"/>
<dbReference type="Orphanet" id="2554">
    <property type="disease" value="Ear-patella-short stature syndrome"/>
</dbReference>
<dbReference type="PharmGKB" id="PA371"/>
<dbReference type="VEuPathDB" id="HostDB:ENSG00000093009"/>
<dbReference type="eggNOG" id="KOG2475">
    <property type="taxonomic scope" value="Eukaryota"/>
</dbReference>
<dbReference type="GeneTree" id="ENSGT00390000009662"/>
<dbReference type="HOGENOM" id="CLU_005871_4_0_1"/>
<dbReference type="InParanoid" id="O75419"/>
<dbReference type="OMA" id="EDCFMEA"/>
<dbReference type="OrthoDB" id="10258882at2759"/>
<dbReference type="PAN-GO" id="O75419">
    <property type="GO annotations" value="7 GO annotations based on evolutionary models"/>
</dbReference>
<dbReference type="PhylomeDB" id="O75419"/>
<dbReference type="TreeFam" id="TF101062"/>
<dbReference type="PathwayCommons" id="O75419"/>
<dbReference type="Reactome" id="R-HSA-176187">
    <property type="pathway name" value="Activation of ATR in response to replication stress"/>
</dbReference>
<dbReference type="Reactome" id="R-HSA-176974">
    <property type="pathway name" value="Unwinding of DNA"/>
</dbReference>
<dbReference type="Reactome" id="R-HSA-68962">
    <property type="pathway name" value="Activation of the pre-replicative complex"/>
</dbReference>
<dbReference type="Reactome" id="R-HSA-69205">
    <property type="pathway name" value="G1/S-Specific Transcription"/>
</dbReference>
<dbReference type="SignaLink" id="O75419"/>
<dbReference type="SIGNOR" id="O75419"/>
<dbReference type="BioGRID-ORCS" id="8318">
    <property type="hits" value="844 hits in 1176 CRISPR screens"/>
</dbReference>
<dbReference type="ChiTaRS" id="CDC45">
    <property type="organism name" value="human"/>
</dbReference>
<dbReference type="GeneWiki" id="CDC45-related_protein"/>
<dbReference type="GenomeRNAi" id="8318"/>
<dbReference type="Pharos" id="O75419">
    <property type="development level" value="Tbio"/>
</dbReference>
<dbReference type="PRO" id="PR:O75419"/>
<dbReference type="Proteomes" id="UP000005640">
    <property type="component" value="Chromosome 22"/>
</dbReference>
<dbReference type="RNAct" id="O75419">
    <property type="molecule type" value="protein"/>
</dbReference>
<dbReference type="Bgee" id="ENSG00000093009">
    <property type="expression patterns" value="Expressed in oocyte and 106 other cell types or tissues"/>
</dbReference>
<dbReference type="ExpressionAtlas" id="O75419">
    <property type="expression patterns" value="baseline and differential"/>
</dbReference>
<dbReference type="GO" id="GO:0005813">
    <property type="term" value="C:centrosome"/>
    <property type="evidence" value="ECO:0000314"/>
    <property type="project" value="HPA"/>
</dbReference>
<dbReference type="GO" id="GO:0036064">
    <property type="term" value="C:ciliary basal body"/>
    <property type="evidence" value="ECO:0000314"/>
    <property type="project" value="GO_Central"/>
</dbReference>
<dbReference type="GO" id="GO:0071162">
    <property type="term" value="C:CMG complex"/>
    <property type="evidence" value="ECO:0000353"/>
    <property type="project" value="ComplexPortal"/>
</dbReference>
<dbReference type="GO" id="GO:0031261">
    <property type="term" value="C:DNA replication preinitiation complex"/>
    <property type="evidence" value="ECO:0000318"/>
    <property type="project" value="GO_Central"/>
</dbReference>
<dbReference type="GO" id="GO:0005654">
    <property type="term" value="C:nucleoplasm"/>
    <property type="evidence" value="ECO:0000314"/>
    <property type="project" value="HPA"/>
</dbReference>
<dbReference type="GO" id="GO:0005634">
    <property type="term" value="C:nucleus"/>
    <property type="evidence" value="ECO:0000314"/>
    <property type="project" value="UniProtKB"/>
</dbReference>
<dbReference type="GO" id="GO:0003682">
    <property type="term" value="F:chromatin binding"/>
    <property type="evidence" value="ECO:0000318"/>
    <property type="project" value="GO_Central"/>
</dbReference>
<dbReference type="GO" id="GO:0003688">
    <property type="term" value="F:DNA replication origin binding"/>
    <property type="evidence" value="ECO:0000318"/>
    <property type="project" value="GO_Central"/>
</dbReference>
<dbReference type="GO" id="GO:0003697">
    <property type="term" value="F:single-stranded DNA binding"/>
    <property type="evidence" value="ECO:0000318"/>
    <property type="project" value="GO_Central"/>
</dbReference>
<dbReference type="GO" id="GO:0000076">
    <property type="term" value="P:DNA replication checkpoint signaling"/>
    <property type="evidence" value="ECO:0000304"/>
    <property type="project" value="ProtInc"/>
</dbReference>
<dbReference type="GO" id="GO:0006270">
    <property type="term" value="P:DNA replication initiation"/>
    <property type="evidence" value="ECO:0000318"/>
    <property type="project" value="GO_Central"/>
</dbReference>
<dbReference type="GO" id="GO:0000727">
    <property type="term" value="P:double-strand break repair via break-induced replication"/>
    <property type="evidence" value="ECO:0000318"/>
    <property type="project" value="GO_Central"/>
</dbReference>
<dbReference type="GO" id="GO:1902977">
    <property type="term" value="P:mitotic DNA replication preinitiation complex assembly"/>
    <property type="evidence" value="ECO:0000318"/>
    <property type="project" value="GO_Central"/>
</dbReference>
<dbReference type="InterPro" id="IPR003874">
    <property type="entry name" value="CDC45"/>
</dbReference>
<dbReference type="PANTHER" id="PTHR10507">
    <property type="entry name" value="CDC45-RELATED PROTEIN"/>
    <property type="match status" value="1"/>
</dbReference>
<dbReference type="PANTHER" id="PTHR10507:SF0">
    <property type="entry name" value="CELL DIVISION CONTROL PROTEIN 45 HOMOLOG"/>
    <property type="match status" value="1"/>
</dbReference>
<dbReference type="Pfam" id="PF02724">
    <property type="entry name" value="CDC45"/>
    <property type="match status" value="1"/>
</dbReference>
<protein>
    <recommendedName>
        <fullName>Cell division control protein 45 homolog</fullName>
    </recommendedName>
    <alternativeName>
        <fullName>PORC-PI-1</fullName>
    </alternativeName>
</protein>
<keyword id="KW-0002">3D-structure</keyword>
<keyword id="KW-0025">Alternative splicing</keyword>
<keyword id="KW-0131">Cell cycle</keyword>
<keyword id="KW-0158">Chromosome</keyword>
<keyword id="KW-0225">Disease variant</keyword>
<keyword id="KW-0235">DNA replication</keyword>
<keyword id="KW-0242">Dwarfism</keyword>
<keyword id="KW-0539">Nucleus</keyword>
<keyword id="KW-0597">Phosphoprotein</keyword>
<keyword id="KW-1267">Proteomics identification</keyword>
<keyword id="KW-1185">Reference proteome</keyword>
<name>CDC45_HUMAN</name>
<feature type="chain" id="PRO_0000192815" description="Cell division control protein 45 homolog">
    <location>
        <begin position="1"/>
        <end position="566"/>
    </location>
</feature>
<feature type="region of interest" description="Disordered" evidence="1">
    <location>
        <begin position="136"/>
        <end position="163"/>
    </location>
</feature>
<feature type="compositionally biased region" description="Basic and acidic residues" evidence="1">
    <location>
        <begin position="153"/>
        <end position="162"/>
    </location>
</feature>
<feature type="modified residue" description="Phosphotyrosine" evidence="17">
    <location>
        <position position="130"/>
    </location>
</feature>
<feature type="modified residue" description="Phosphoserine" evidence="17">
    <location>
        <position position="144"/>
    </location>
</feature>
<feature type="modified residue" description="Phosphoserine" evidence="17">
    <location>
        <position position="148"/>
    </location>
</feature>
<feature type="splice variant" id="VSP_043129" description="In isoform 2." evidence="9">
    <location>
        <begin position="68"/>
        <end position="113"/>
    </location>
</feature>
<feature type="splice variant" id="VSP_045411" description="In isoform 3." evidence="9">
    <original>R</original>
    <variation>RSGSGSEPVAAALEKSSRLFAGPMSDRTAPRSP</variation>
    <location>
        <position position="180"/>
    </location>
</feature>
<feature type="sequence variant" id="VAR_080963" description="In MGORS7; decreased protein level; dbSNP:rs879255633." evidence="3">
    <original>Q</original>
    <variation>R</variation>
    <location>
        <position position="68"/>
    </location>
</feature>
<feature type="sequence variant" id="VAR_080964" description="In MGORS7; decreased protein level; dbSNP:rs879255632." evidence="3">
    <original>N</original>
    <variation>H</variation>
    <location>
        <position position="76"/>
    </location>
</feature>
<feature type="sequence variant" id="VAR_019286" description="In dbSNP:rs13447203." evidence="8">
    <original>V</original>
    <variation>I</variation>
    <location>
        <position position="81"/>
    </location>
</feature>
<feature type="sequence variant" id="VAR_080965" description="In MGORS7; uncertain significance; associated in cis with T-321; dbSNP:rs9606030." evidence="3">
    <original>E</original>
    <variation>G</variation>
    <location>
        <position position="155"/>
    </location>
</feature>
<feature type="sequence variant" id="VAR_080966" description="In MGORS7; decreased protein level; dbSNP:rs540217942." evidence="3">
    <original>R</original>
    <variation>C</variation>
    <location>
        <position position="157"/>
    </location>
</feature>
<feature type="sequence variant" id="VAR_080967" description="In MGORS7; decreased protein level; dbSNP:rs754080445." evidence="3">
    <original>D</original>
    <variation>G</variation>
    <location>
        <position position="226"/>
    </location>
</feature>
<feature type="sequence variant" id="VAR_080968" description="In MGORS7; uncertain significance; dbSNP:rs151279621." evidence="3">
    <original>S</original>
    <variation>Y</variation>
    <location>
        <position position="264"/>
    </location>
</feature>
<feature type="sequence variant" id="VAR_080969" description="In MGORS7; decreased protein level; dbSNP:rs146559223." evidence="3">
    <original>A</original>
    <variation>V</variation>
    <location>
        <position position="298"/>
    </location>
</feature>
<feature type="sequence variant" id="VAR_080970" description="In MGORS7; uncertain significance; associated in cis with G-155." evidence="3">
    <original>P</original>
    <variation>T</variation>
    <location>
        <position position="321"/>
    </location>
</feature>
<feature type="sequence variant" id="VAR_053026" description="In dbSNP:rs17209274.">
    <original>M</original>
    <variation>R</variation>
    <location>
        <position position="356"/>
    </location>
</feature>
<feature type="sequence variant" id="VAR_019287" description="In dbSNP:rs13447263." evidence="8">
    <original>V</original>
    <variation>M</variation>
    <location>
        <position position="376"/>
    </location>
</feature>
<feature type="sequence variant" id="VAR_080971" description="In MGORS7; likely pathogenic." evidence="3">
    <location>
        <begin position="424"/>
        <end position="566"/>
    </location>
</feature>
<feature type="sequence variant" id="VAR_080972" description="In MGORS7; likely pathogenic; dbSNP:rs751663397." evidence="3">
    <original>P</original>
    <variation>L</variation>
    <location>
        <position position="463"/>
    </location>
</feature>
<feature type="sequence variant" id="VAR_080973" description="In MGORS7; uncertain significance; dbSNP:rs1376596361." evidence="3">
    <original>P</original>
    <variation>L</variation>
    <location>
        <position position="496"/>
    </location>
</feature>
<feature type="sequence variant" id="VAR_080974" description="In MGORS7; uncertain significance; dbSNP:rs778665661." evidence="3">
    <original>R</original>
    <variation>W</variation>
    <location>
        <position position="554"/>
    </location>
</feature>
<feature type="sequence conflict" description="In Ref. 5; AAQ89330." evidence="10" ref="5">
    <original>T</original>
    <variation>S</variation>
    <location>
        <position position="100"/>
    </location>
</feature>
<feature type="sequence conflict" description="In Ref. 3; CAA11530." evidence="10" ref="3">
    <original>I</original>
    <variation>V</variation>
    <location>
        <position position="115"/>
    </location>
</feature>
<feature type="sequence conflict" description="In Ref. 1; AAC67521." evidence="10" ref="1">
    <original>E</original>
    <variation>Q</variation>
    <location>
        <position position="346"/>
    </location>
</feature>
<feature type="sequence conflict" description="In Ref. 6; BAG56854." evidence="10" ref="6">
    <original>I</original>
    <variation>F</variation>
    <location>
        <position position="509"/>
    </location>
</feature>
<feature type="helix" evidence="18">
    <location>
        <begin position="6"/>
        <end position="10"/>
    </location>
</feature>
<feature type="helix" evidence="18">
    <location>
        <begin position="11"/>
        <end position="14"/>
    </location>
</feature>
<feature type="strand" evidence="18">
    <location>
        <begin position="17"/>
        <end position="26"/>
    </location>
</feature>
<feature type="helix" evidence="18">
    <location>
        <begin position="27"/>
        <end position="42"/>
    </location>
</feature>
<feature type="strand" evidence="18">
    <location>
        <begin position="46"/>
        <end position="54"/>
    </location>
</feature>
<feature type="helix" evidence="18">
    <location>
        <begin position="55"/>
        <end position="65"/>
    </location>
</feature>
<feature type="turn" evidence="18">
    <location>
        <begin position="66"/>
        <end position="68"/>
    </location>
</feature>
<feature type="strand" evidence="18">
    <location>
        <begin position="70"/>
        <end position="78"/>
    </location>
</feature>
<feature type="helix" evidence="18">
    <location>
        <begin position="83"/>
        <end position="87"/>
    </location>
</feature>
<feature type="strand" evidence="18">
    <location>
        <begin position="94"/>
        <end position="98"/>
    </location>
</feature>
<feature type="strand" evidence="18">
    <location>
        <begin position="101"/>
        <end position="103"/>
    </location>
</feature>
<feature type="helix" evidence="18">
    <location>
        <begin position="106"/>
        <end position="110"/>
    </location>
</feature>
<feature type="strand" evidence="18">
    <location>
        <begin position="113"/>
        <end position="117"/>
    </location>
</feature>
<feature type="helix" evidence="18">
    <location>
        <begin position="130"/>
        <end position="133"/>
    </location>
</feature>
<feature type="helix" evidence="18">
    <location>
        <begin position="165"/>
        <end position="189"/>
    </location>
</feature>
<feature type="strand" evidence="18">
    <location>
        <begin position="192"/>
        <end position="194"/>
    </location>
</feature>
<feature type="helix" evidence="18">
    <location>
        <begin position="198"/>
        <end position="208"/>
    </location>
</feature>
<feature type="helix" evidence="18">
    <location>
        <begin position="214"/>
        <end position="229"/>
    </location>
</feature>
<feature type="helix" evidence="18">
    <location>
        <begin position="235"/>
        <end position="255"/>
    </location>
</feature>
<feature type="strand" evidence="18">
    <location>
        <begin position="269"/>
        <end position="277"/>
    </location>
</feature>
<feature type="helix" evidence="18">
    <location>
        <begin position="281"/>
        <end position="283"/>
    </location>
</feature>
<feature type="helix" evidence="18">
    <location>
        <begin position="286"/>
        <end position="292"/>
    </location>
</feature>
<feature type="helix" evidence="18">
    <location>
        <begin position="294"/>
        <end position="299"/>
    </location>
</feature>
<feature type="turn" evidence="18">
    <location>
        <begin position="300"/>
        <end position="303"/>
    </location>
</feature>
<feature type="helix" evidence="18">
    <location>
        <begin position="305"/>
        <end position="318"/>
    </location>
</feature>
<feature type="helix" evidence="18">
    <location>
        <begin position="322"/>
        <end position="326"/>
    </location>
</feature>
<feature type="helix" evidence="18">
    <location>
        <begin position="329"/>
        <end position="331"/>
    </location>
</feature>
<feature type="helix" evidence="18">
    <location>
        <begin position="334"/>
        <end position="350"/>
    </location>
</feature>
<feature type="strand" evidence="18">
    <location>
        <begin position="356"/>
        <end position="366"/>
    </location>
</feature>
<feature type="strand" evidence="18">
    <location>
        <begin position="369"/>
        <end position="372"/>
    </location>
</feature>
<feature type="helix" evidence="18">
    <location>
        <begin position="373"/>
        <end position="384"/>
    </location>
</feature>
<feature type="strand" evidence="18">
    <location>
        <begin position="389"/>
        <end position="391"/>
    </location>
</feature>
<feature type="helix" evidence="18">
    <location>
        <begin position="393"/>
        <end position="403"/>
    </location>
</feature>
<feature type="helix" evidence="18">
    <location>
        <begin position="410"/>
        <end position="435"/>
    </location>
</feature>
<feature type="strand" evidence="18">
    <location>
        <begin position="443"/>
        <end position="449"/>
    </location>
</feature>
<feature type="helix" evidence="18">
    <location>
        <begin position="457"/>
        <end position="459"/>
    </location>
</feature>
<feature type="helix" evidence="18">
    <location>
        <begin position="463"/>
        <end position="480"/>
    </location>
</feature>
<feature type="helix" evidence="18">
    <location>
        <begin position="486"/>
        <end position="488"/>
    </location>
</feature>
<feature type="strand" evidence="18">
    <location>
        <begin position="491"/>
        <end position="498"/>
    </location>
</feature>
<feature type="turn" evidence="18">
    <location>
        <begin position="499"/>
        <end position="502"/>
    </location>
</feature>
<feature type="strand" evidence="18">
    <location>
        <begin position="503"/>
        <end position="509"/>
    </location>
</feature>
<feature type="helix" evidence="18">
    <location>
        <begin position="522"/>
        <end position="531"/>
    </location>
</feature>
<feature type="turn" evidence="18">
    <location>
        <begin position="532"/>
        <end position="534"/>
    </location>
</feature>
<feature type="strand" evidence="18">
    <location>
        <begin position="541"/>
        <end position="543"/>
    </location>
</feature>
<feature type="strand" evidence="18">
    <location>
        <begin position="546"/>
        <end position="550"/>
    </location>
</feature>
<feature type="helix" evidence="18">
    <location>
        <begin position="551"/>
        <end position="553"/>
    </location>
</feature>
<feature type="helix" evidence="18">
    <location>
        <begin position="554"/>
        <end position="565"/>
    </location>
</feature>
<proteinExistence type="evidence at protein level"/>
<organism>
    <name type="scientific">Homo sapiens</name>
    <name type="common">Human</name>
    <dbReference type="NCBI Taxonomy" id="9606"/>
    <lineage>
        <taxon>Eukaryota</taxon>
        <taxon>Metazoa</taxon>
        <taxon>Chordata</taxon>
        <taxon>Craniata</taxon>
        <taxon>Vertebrata</taxon>
        <taxon>Euteleostomi</taxon>
        <taxon>Mammalia</taxon>
        <taxon>Eutheria</taxon>
        <taxon>Euarchontoglires</taxon>
        <taxon>Primates</taxon>
        <taxon>Haplorrhini</taxon>
        <taxon>Catarrhini</taxon>
        <taxon>Hominidae</taxon>
        <taxon>Homo</taxon>
    </lineage>
</organism>
<evidence type="ECO:0000256" key="1">
    <source>
        <dbReference type="SAM" id="MobiDB-lite"/>
    </source>
</evidence>
<evidence type="ECO:0000269" key="2">
    <source>
    </source>
</evidence>
<evidence type="ECO:0000269" key="3">
    <source>
    </source>
</evidence>
<evidence type="ECO:0000269" key="4">
    <source>
    </source>
</evidence>
<evidence type="ECO:0000269" key="5">
    <source>
    </source>
</evidence>
<evidence type="ECO:0000269" key="6">
    <source>
    </source>
</evidence>
<evidence type="ECO:0000269" key="7">
    <source>
    </source>
</evidence>
<evidence type="ECO:0000269" key="8">
    <source ref="8"/>
</evidence>
<evidence type="ECO:0000303" key="9">
    <source>
    </source>
</evidence>
<evidence type="ECO:0000305" key="10"/>
<evidence type="ECO:0000305" key="11">
    <source>
    </source>
</evidence>
<evidence type="ECO:0000312" key="12">
    <source>
        <dbReference type="HGNC" id="HGNC:1739"/>
    </source>
</evidence>
<evidence type="ECO:0007744" key="13">
    <source>
        <dbReference type="PDB" id="6XTX"/>
    </source>
</evidence>
<evidence type="ECO:0007744" key="14">
    <source>
        <dbReference type="PDB" id="6XTY"/>
    </source>
</evidence>
<evidence type="ECO:0007744" key="15">
    <source>
        <dbReference type="PDB" id="7PFO"/>
    </source>
</evidence>
<evidence type="ECO:0007744" key="16">
    <source>
        <dbReference type="PDB" id="7PLO"/>
    </source>
</evidence>
<evidence type="ECO:0007744" key="17">
    <source>
    </source>
</evidence>
<evidence type="ECO:0007829" key="18">
    <source>
        <dbReference type="PDB" id="5DGO"/>
    </source>
</evidence>
<comment type="function">
    <text evidence="4 5 6 7">Required for initiation of chromosomal DNA replication. Core component of CDC45-MCM-GINS (CMG) helicase, the molecular machine that unwinds template DNA during replication, and around which the replisome is built.</text>
</comment>
<comment type="subunit">
    <text evidence="2 4 5 6">Component of the CMG helicase complex, a hexameric ring of related MCM2-7 subunits stabilized by CDC45 and the tetrameric GINS complex (PubMed:32453425, PubMed:34694004, PubMed:34700328). Associated with ORC2. Interacts with HELB (PubMed:25933514).</text>
</comment>
<comment type="interaction">
    <interactant intactId="EBI-374969">
        <id>O75419</id>
    </interactant>
    <interactant intactId="EBI-375077">
        <id>P38936</id>
        <label>CDKN1A</label>
    </interactant>
    <organismsDiffer>false</organismsDiffer>
    <experiments>2</experiments>
</comment>
<comment type="interaction">
    <interactant intactId="EBI-374969">
        <id>O75419</id>
    </interactant>
    <interactant intactId="EBI-747776">
        <id>Q53EZ4</id>
        <label>CEP55</label>
    </interactant>
    <organismsDiffer>false</organismsDiffer>
    <experiments>7</experiments>
</comment>
<comment type="interaction">
    <interactant intactId="EBI-374969">
        <id>O75419</id>
    </interactant>
    <interactant intactId="EBI-1369377">
        <id>Q9HAW4</id>
        <label>CLSPN</label>
    </interactant>
    <organismsDiffer>false</organismsDiffer>
    <experiments>5</experiments>
</comment>
<comment type="interaction">
    <interactant intactId="EBI-374969">
        <id>O75419</id>
    </interactant>
    <interactant intactId="EBI-742054">
        <id>Q96D03</id>
        <label>DDIT4L</label>
    </interactant>
    <organismsDiffer>false</organismsDiffer>
    <experiments>3</experiments>
</comment>
<comment type="interaction">
    <interactant intactId="EBI-374969">
        <id>O75419</id>
    </interactant>
    <interactant intactId="EBI-747500">
        <id>Q9BRT9</id>
        <label>GINS4</label>
    </interactant>
    <organismsDiffer>false</organismsDiffer>
    <experiments>3</experiments>
</comment>
<comment type="interaction">
    <interactant intactId="EBI-374969">
        <id>O75419</id>
    </interactant>
    <interactant intactId="EBI-396343">
        <id>O00629</id>
        <label>KPNA4</label>
    </interactant>
    <organismsDiffer>false</organismsDiffer>
    <experiments>2</experiments>
</comment>
<comment type="interaction">
    <interactant intactId="EBI-374969">
        <id>O75419</id>
    </interactant>
    <interactant intactId="EBI-374819">
        <id>P49736</id>
        <label>MCM2</label>
    </interactant>
    <organismsDiffer>false</organismsDiffer>
    <experiments>2</experiments>
</comment>
<comment type="interaction">
    <interactant intactId="EBI-374969">
        <id>O75419</id>
    </interactant>
    <interactant intactId="EBI-10218066">
        <id>P61018</id>
        <label>RAB4B</label>
    </interactant>
    <organismsDiffer>false</organismsDiffer>
    <experiments>3</experiments>
</comment>
<comment type="interaction">
    <interactant intactId="EBI-374969">
        <id>O75419</id>
    </interactant>
    <interactant intactId="EBI-621404">
        <id>P15927</id>
        <label>RPA2</label>
    </interactant>
    <organismsDiffer>false</organismsDiffer>
    <experiments>4</experiments>
</comment>
<comment type="interaction">
    <interactant intactId="EBI-374969">
        <id>O75419</id>
    </interactant>
    <interactant intactId="EBI-308302">
        <id>Q92547</id>
        <label>TOPBP1</label>
    </interactant>
    <organismsDiffer>false</organismsDiffer>
    <experiments>6</experiments>
</comment>
<comment type="interaction">
    <interactant intactId="EBI-374969">
        <id>O75419</id>
    </interactant>
    <interactant intactId="EBI-527853">
        <id>Q9UGI0</id>
        <label>ZRANB1</label>
    </interactant>
    <organismsDiffer>false</organismsDiffer>
    <experiments>3</experiments>
</comment>
<comment type="subcellular location">
    <subcellularLocation>
        <location evidence="11">Nucleus</location>
    </subcellularLocation>
    <subcellularLocation>
        <location evidence="11">Chromosome</location>
    </subcellularLocation>
    <text evidence="11">Associates with chromatin.</text>
</comment>
<comment type="alternative products">
    <event type="alternative splicing"/>
    <isoform>
        <id>O75419-1</id>
        <name>1</name>
        <sequence type="displayed"/>
    </isoform>
    <isoform>
        <id>O75419-2</id>
        <name>2</name>
        <sequence type="described" ref="VSP_043129"/>
    </isoform>
    <isoform>
        <id>O75419-3</id>
        <name>3</name>
        <sequence type="described" ref="VSP_045411"/>
    </isoform>
</comment>
<comment type="tissue specificity">
    <text>Widely expressed, highest levels are found in adult testis and thymus and in fetal liver.</text>
</comment>
<comment type="developmental stage">
    <text>Transcript peaks at G1-S transition, but total protein remains constant throughout the cell cycle. Expressed in multiple tissues during embryogenesis, including neural crest-derived structures.</text>
</comment>
<comment type="disease" evidence="3">
    <disease id="DI-04797">
        <name>Meier-Gorlin syndrome 7</name>
        <acronym>MGORS7</acronym>
        <description>A form of Meier-Gorlin syndrome, a syndrome characterized by bilateral microtia, aplasia/hypoplasia of the patellae, and severe intrauterine and postnatal growth retardation with short stature and poor weight gain. Additional clinical findings include anomalies of cranial sutures, microcephaly, apparently low-set and simple ears, microstomia, full lips, highly arched or cleft palate, micrognathia, genitourinary tract anomalies, and various skeletal anomalies. While almost all cases have primordial dwarfism with substantial prenatal and postnatal growth retardation, not all cases have microcephaly, and microtia and absent/hypoplastic patella are absent in some. Despite the presence of microcephaly, intellect is usually normal. MGORS7 inheritance is autosomal recessive.</description>
        <dbReference type="MIM" id="617063"/>
    </disease>
    <text>The disease is caused by variants affecting the gene represented in this entry.</text>
</comment>
<comment type="similarity">
    <text evidence="10">Belongs to the CDC45 family.</text>
</comment>
<reference key="1">
    <citation type="journal article" date="1998" name="EMBO J.">
        <title>Xenopus Cdc45-dependent loading of DNA polymerase alpha onto chromatin under the control of S-phase Cdk.</title>
        <authorList>
            <person name="Mimura S."/>
            <person name="Takisawa H."/>
        </authorList>
    </citation>
    <scope>NUCLEOTIDE SEQUENCE [MRNA] (ISOFORM 1)</scope>
</reference>
<reference key="2">
    <citation type="journal article" date="1998" name="J. Biol. Chem.">
        <title>The human homolog of Saccharomyces cerevisiae CDC45.</title>
        <authorList>
            <person name="Saha P."/>
            <person name="Thome K.C."/>
            <person name="Yamaguchi R."/>
            <person name="Hou Z.-H."/>
            <person name="Weremowicz S."/>
            <person name="Dutta A."/>
        </authorList>
    </citation>
    <scope>NUCLEOTIDE SEQUENCE [MRNA] (ISOFORM 1)</scope>
</reference>
<reference key="3">
    <citation type="journal article" date="1998" name="Genome Res.">
        <title>Direct selection of conserved cDNAs from the DiGeorge critical region: isolation of a novel CDC45-like gene.</title>
        <authorList>
            <person name="McKie J.M."/>
            <person name="Wadey R.B."/>
            <person name="Sutherland H.F."/>
            <person name="Taylor C.L."/>
            <person name="Scambler P.J."/>
        </authorList>
    </citation>
    <scope>NUCLEOTIDE SEQUENCE [MRNA] (ISOFORM 1)</scope>
</reference>
<reference key="4">
    <citation type="journal article" date="1999" name="Mamm. Genome">
        <title>Characterization of CDC45L: a gene in the 22q11.2 deletion region expressed during murine and human development.</title>
        <authorList>
            <person name="Shaikh T.H."/>
            <person name="Gottlieb S."/>
            <person name="Sellinger B."/>
            <person name="Chen F."/>
            <person name="Roe B.A."/>
            <person name="Oakey R.J."/>
            <person name="Emanuel B.S."/>
            <person name="Budarf M.L."/>
        </authorList>
    </citation>
    <scope>NUCLEOTIDE SEQUENCE [MRNA] (ISOFORM 1)</scope>
    <source>
        <tissue>Brain</tissue>
    </source>
</reference>
<reference key="5">
    <citation type="journal article" date="2003" name="Genome Res.">
        <title>The secreted protein discovery initiative (SPDI), a large-scale effort to identify novel human secreted and transmembrane proteins: a bioinformatics assessment.</title>
        <authorList>
            <person name="Clark H.F."/>
            <person name="Gurney A.L."/>
            <person name="Abaya E."/>
            <person name="Baker K."/>
            <person name="Baldwin D.T."/>
            <person name="Brush J."/>
            <person name="Chen J."/>
            <person name="Chow B."/>
            <person name="Chui C."/>
            <person name="Crowley C."/>
            <person name="Currell B."/>
            <person name="Deuel B."/>
            <person name="Dowd P."/>
            <person name="Eaton D."/>
            <person name="Foster J.S."/>
            <person name="Grimaldi C."/>
            <person name="Gu Q."/>
            <person name="Hass P.E."/>
            <person name="Heldens S."/>
            <person name="Huang A."/>
            <person name="Kim H.S."/>
            <person name="Klimowski L."/>
            <person name="Jin Y."/>
            <person name="Johnson S."/>
            <person name="Lee J."/>
            <person name="Lewis L."/>
            <person name="Liao D."/>
            <person name="Mark M.R."/>
            <person name="Robbie E."/>
            <person name="Sanchez C."/>
            <person name="Schoenfeld J."/>
            <person name="Seshagiri S."/>
            <person name="Simmons L."/>
            <person name="Singh J."/>
            <person name="Smith V."/>
            <person name="Stinson J."/>
            <person name="Vagts A."/>
            <person name="Vandlen R.L."/>
            <person name="Watanabe C."/>
            <person name="Wieand D."/>
            <person name="Woods K."/>
            <person name="Xie M.-H."/>
            <person name="Yansura D.G."/>
            <person name="Yi S."/>
            <person name="Yu G."/>
            <person name="Yuan J."/>
            <person name="Zhang M."/>
            <person name="Zhang Z."/>
            <person name="Goddard A.D."/>
            <person name="Wood W.I."/>
            <person name="Godowski P.J."/>
            <person name="Gray A.M."/>
        </authorList>
    </citation>
    <scope>NUCLEOTIDE SEQUENCE [LARGE SCALE MRNA] (ISOFORM 1)</scope>
</reference>
<reference key="6">
    <citation type="journal article" date="2004" name="Nat. Genet.">
        <title>Complete sequencing and characterization of 21,243 full-length human cDNAs.</title>
        <authorList>
            <person name="Ota T."/>
            <person name="Suzuki Y."/>
            <person name="Nishikawa T."/>
            <person name="Otsuki T."/>
            <person name="Sugiyama T."/>
            <person name="Irie R."/>
            <person name="Wakamatsu A."/>
            <person name="Hayashi K."/>
            <person name="Sato H."/>
            <person name="Nagai K."/>
            <person name="Kimura K."/>
            <person name="Makita H."/>
            <person name="Sekine M."/>
            <person name="Obayashi M."/>
            <person name="Nishi T."/>
            <person name="Shibahara T."/>
            <person name="Tanaka T."/>
            <person name="Ishii S."/>
            <person name="Yamamoto J."/>
            <person name="Saito K."/>
            <person name="Kawai Y."/>
            <person name="Isono Y."/>
            <person name="Nakamura Y."/>
            <person name="Nagahari K."/>
            <person name="Murakami K."/>
            <person name="Yasuda T."/>
            <person name="Iwayanagi T."/>
            <person name="Wagatsuma M."/>
            <person name="Shiratori A."/>
            <person name="Sudo H."/>
            <person name="Hosoiri T."/>
            <person name="Kaku Y."/>
            <person name="Kodaira H."/>
            <person name="Kondo H."/>
            <person name="Sugawara M."/>
            <person name="Takahashi M."/>
            <person name="Kanda K."/>
            <person name="Yokoi T."/>
            <person name="Furuya T."/>
            <person name="Kikkawa E."/>
            <person name="Omura Y."/>
            <person name="Abe K."/>
            <person name="Kamihara K."/>
            <person name="Katsuta N."/>
            <person name="Sato K."/>
            <person name="Tanikawa M."/>
            <person name="Yamazaki M."/>
            <person name="Ninomiya K."/>
            <person name="Ishibashi T."/>
            <person name="Yamashita H."/>
            <person name="Murakawa K."/>
            <person name="Fujimori K."/>
            <person name="Tanai H."/>
            <person name="Kimata M."/>
            <person name="Watanabe M."/>
            <person name="Hiraoka S."/>
            <person name="Chiba Y."/>
            <person name="Ishida S."/>
            <person name="Ono Y."/>
            <person name="Takiguchi S."/>
            <person name="Watanabe S."/>
            <person name="Yosida M."/>
            <person name="Hotuta T."/>
            <person name="Kusano J."/>
            <person name="Kanehori K."/>
            <person name="Takahashi-Fujii A."/>
            <person name="Hara H."/>
            <person name="Tanase T.-O."/>
            <person name="Nomura Y."/>
            <person name="Togiya S."/>
            <person name="Komai F."/>
            <person name="Hara R."/>
            <person name="Takeuchi K."/>
            <person name="Arita M."/>
            <person name="Imose N."/>
            <person name="Musashino K."/>
            <person name="Yuuki H."/>
            <person name="Oshima A."/>
            <person name="Sasaki N."/>
            <person name="Aotsuka S."/>
            <person name="Yoshikawa Y."/>
            <person name="Matsunawa H."/>
            <person name="Ichihara T."/>
            <person name="Shiohata N."/>
            <person name="Sano S."/>
            <person name="Moriya S."/>
            <person name="Momiyama H."/>
            <person name="Satoh N."/>
            <person name="Takami S."/>
            <person name="Terashima Y."/>
            <person name="Suzuki O."/>
            <person name="Nakagawa S."/>
            <person name="Senoh A."/>
            <person name="Mizoguchi H."/>
            <person name="Goto Y."/>
            <person name="Shimizu F."/>
            <person name="Wakebe H."/>
            <person name="Hishigaki H."/>
            <person name="Watanabe T."/>
            <person name="Sugiyama A."/>
            <person name="Takemoto M."/>
            <person name="Kawakami B."/>
            <person name="Yamazaki M."/>
            <person name="Watanabe K."/>
            <person name="Kumagai A."/>
            <person name="Itakura S."/>
            <person name="Fukuzumi Y."/>
            <person name="Fujimori Y."/>
            <person name="Komiyama M."/>
            <person name="Tashiro H."/>
            <person name="Tanigami A."/>
            <person name="Fujiwara T."/>
            <person name="Ono T."/>
            <person name="Yamada K."/>
            <person name="Fujii Y."/>
            <person name="Ozaki K."/>
            <person name="Hirao M."/>
            <person name="Ohmori Y."/>
            <person name="Kawabata A."/>
            <person name="Hikiji T."/>
            <person name="Kobatake N."/>
            <person name="Inagaki H."/>
            <person name="Ikema Y."/>
            <person name="Okamoto S."/>
            <person name="Okitani R."/>
            <person name="Kawakami T."/>
            <person name="Noguchi S."/>
            <person name="Itoh T."/>
            <person name="Shigeta K."/>
            <person name="Senba T."/>
            <person name="Matsumura K."/>
            <person name="Nakajima Y."/>
            <person name="Mizuno T."/>
            <person name="Morinaga M."/>
            <person name="Sasaki M."/>
            <person name="Togashi T."/>
            <person name="Oyama M."/>
            <person name="Hata H."/>
            <person name="Watanabe M."/>
            <person name="Komatsu T."/>
            <person name="Mizushima-Sugano J."/>
            <person name="Satoh T."/>
            <person name="Shirai Y."/>
            <person name="Takahashi Y."/>
            <person name="Nakagawa K."/>
            <person name="Okumura K."/>
            <person name="Nagase T."/>
            <person name="Nomura N."/>
            <person name="Kikuchi H."/>
            <person name="Masuho Y."/>
            <person name="Yamashita R."/>
            <person name="Nakai K."/>
            <person name="Yada T."/>
            <person name="Nakamura Y."/>
            <person name="Ohara O."/>
            <person name="Isogai T."/>
            <person name="Sugano S."/>
        </authorList>
    </citation>
    <scope>NUCLEOTIDE SEQUENCE [LARGE SCALE MRNA] (ISOFORMS 2 AND 3)</scope>
</reference>
<reference key="7">
    <citation type="submission" date="2004-10" db="EMBL/GenBank/DDBJ databases">
        <title>Cloning of human full-length CDSs in BD Creator(TM) system donor vector.</title>
        <authorList>
            <person name="Kalnine N."/>
            <person name="Chen X."/>
            <person name="Rolfs A."/>
            <person name="Halleck A."/>
            <person name="Hines L."/>
            <person name="Eisenstein S."/>
            <person name="Koundinya M."/>
            <person name="Raphael J."/>
            <person name="Moreira D."/>
            <person name="Kelley T."/>
            <person name="LaBaer J."/>
            <person name="Lin Y."/>
            <person name="Phelan M."/>
            <person name="Farmer A."/>
        </authorList>
    </citation>
    <scope>NUCLEOTIDE SEQUENCE [LARGE SCALE MRNA] (ISOFORM 1)</scope>
</reference>
<reference key="8">
    <citation type="submission" date="2004-03" db="EMBL/GenBank/DDBJ databases">
        <authorList>
            <consortium name="NIEHS SNPs program"/>
        </authorList>
    </citation>
    <scope>NUCLEOTIDE SEQUENCE [GENOMIC DNA]</scope>
    <scope>VARIANTS ILE-81 AND MET-376</scope>
</reference>
<reference key="9">
    <citation type="journal article" date="2004" name="Genome Biol.">
        <title>A genome annotation-driven approach to cloning the human ORFeome.</title>
        <authorList>
            <person name="Collins J.E."/>
            <person name="Wright C.L."/>
            <person name="Edwards C.A."/>
            <person name="Davis M.P."/>
            <person name="Grinham J.A."/>
            <person name="Cole C.G."/>
            <person name="Goward M.E."/>
            <person name="Aguado B."/>
            <person name="Mallya M."/>
            <person name="Mokrab Y."/>
            <person name="Huckle E.J."/>
            <person name="Beare D.M."/>
            <person name="Dunham I."/>
        </authorList>
    </citation>
    <scope>NUCLEOTIDE SEQUENCE [LARGE SCALE MRNA] (ISOFORM 1)</scope>
</reference>
<reference key="10">
    <citation type="journal article" date="1999" name="Nature">
        <title>The DNA sequence of human chromosome 22.</title>
        <authorList>
            <person name="Dunham I."/>
            <person name="Hunt A.R."/>
            <person name="Collins J.E."/>
            <person name="Bruskiewich R."/>
            <person name="Beare D.M."/>
            <person name="Clamp M."/>
            <person name="Smink L.J."/>
            <person name="Ainscough R."/>
            <person name="Almeida J.P."/>
            <person name="Babbage A.K."/>
            <person name="Bagguley C."/>
            <person name="Bailey J."/>
            <person name="Barlow K.F."/>
            <person name="Bates K.N."/>
            <person name="Beasley O.P."/>
            <person name="Bird C.P."/>
            <person name="Blakey S.E."/>
            <person name="Bridgeman A.M."/>
            <person name="Buck D."/>
            <person name="Burgess J."/>
            <person name="Burrill W.D."/>
            <person name="Burton J."/>
            <person name="Carder C."/>
            <person name="Carter N.P."/>
            <person name="Chen Y."/>
            <person name="Clark G."/>
            <person name="Clegg S.M."/>
            <person name="Cobley V.E."/>
            <person name="Cole C.G."/>
            <person name="Collier R.E."/>
            <person name="Connor R."/>
            <person name="Conroy D."/>
            <person name="Corby N.R."/>
            <person name="Coville G.J."/>
            <person name="Cox A.V."/>
            <person name="Davis J."/>
            <person name="Dawson E."/>
            <person name="Dhami P.D."/>
            <person name="Dockree C."/>
            <person name="Dodsworth S.J."/>
            <person name="Durbin R.M."/>
            <person name="Ellington A.G."/>
            <person name="Evans K.L."/>
            <person name="Fey J.M."/>
            <person name="Fleming K."/>
            <person name="French L."/>
            <person name="Garner A.A."/>
            <person name="Gilbert J.G.R."/>
            <person name="Goward M.E."/>
            <person name="Grafham D.V."/>
            <person name="Griffiths M.N.D."/>
            <person name="Hall C."/>
            <person name="Hall R.E."/>
            <person name="Hall-Tamlyn G."/>
            <person name="Heathcott R.W."/>
            <person name="Ho S."/>
            <person name="Holmes S."/>
            <person name="Hunt S.E."/>
            <person name="Jones M.C."/>
            <person name="Kershaw J."/>
            <person name="Kimberley A.M."/>
            <person name="King A."/>
            <person name="Laird G.K."/>
            <person name="Langford C.F."/>
            <person name="Leversha M.A."/>
            <person name="Lloyd C."/>
            <person name="Lloyd D.M."/>
            <person name="Martyn I.D."/>
            <person name="Mashreghi-Mohammadi M."/>
            <person name="Matthews L.H."/>
            <person name="Mccann O.T."/>
            <person name="Mcclay J."/>
            <person name="Mclaren S."/>
            <person name="McMurray A.A."/>
            <person name="Milne S.A."/>
            <person name="Mortimore B.J."/>
            <person name="Odell C.N."/>
            <person name="Pavitt R."/>
            <person name="Pearce A.V."/>
            <person name="Pearson D."/>
            <person name="Phillimore B.J.C.T."/>
            <person name="Phillips S.H."/>
            <person name="Plumb R.W."/>
            <person name="Ramsay H."/>
            <person name="Ramsey Y."/>
            <person name="Rogers L."/>
            <person name="Ross M.T."/>
            <person name="Scott C.E."/>
            <person name="Sehra H.K."/>
            <person name="Skuce C.D."/>
            <person name="Smalley S."/>
            <person name="Smith M.L."/>
            <person name="Soderlund C."/>
            <person name="Spragon L."/>
            <person name="Steward C.A."/>
            <person name="Sulston J.E."/>
            <person name="Swann R.M."/>
            <person name="Vaudin M."/>
            <person name="Wall M."/>
            <person name="Wallis J.M."/>
            <person name="Whiteley M.N."/>
            <person name="Willey D.L."/>
            <person name="Williams L."/>
            <person name="Williams S.A."/>
            <person name="Williamson H."/>
            <person name="Wilmer T.E."/>
            <person name="Wilming L."/>
            <person name="Wright C.L."/>
            <person name="Hubbard T."/>
            <person name="Bentley D.R."/>
            <person name="Beck S."/>
            <person name="Rogers J."/>
            <person name="Shimizu N."/>
            <person name="Minoshima S."/>
            <person name="Kawasaki K."/>
            <person name="Sasaki T."/>
            <person name="Asakawa S."/>
            <person name="Kudoh J."/>
            <person name="Shintani A."/>
            <person name="Shibuya K."/>
            <person name="Yoshizaki Y."/>
            <person name="Aoki N."/>
            <person name="Mitsuyama S."/>
            <person name="Roe B.A."/>
            <person name="Chen F."/>
            <person name="Chu L."/>
            <person name="Crabtree J."/>
            <person name="Deschamps S."/>
            <person name="Do A."/>
            <person name="Do T."/>
            <person name="Dorman A."/>
            <person name="Fang F."/>
            <person name="Fu Y."/>
            <person name="Hu P."/>
            <person name="Hua A."/>
            <person name="Kenton S."/>
            <person name="Lai H."/>
            <person name="Lao H.I."/>
            <person name="Lewis J."/>
            <person name="Lewis S."/>
            <person name="Lin S.-P."/>
            <person name="Loh P."/>
            <person name="Malaj E."/>
            <person name="Nguyen T."/>
            <person name="Pan H."/>
            <person name="Phan S."/>
            <person name="Qi S."/>
            <person name="Qian Y."/>
            <person name="Ray L."/>
            <person name="Ren Q."/>
            <person name="Shaull S."/>
            <person name="Sloan D."/>
            <person name="Song L."/>
            <person name="Wang Q."/>
            <person name="Wang Y."/>
            <person name="Wang Z."/>
            <person name="White J."/>
            <person name="Willingham D."/>
            <person name="Wu H."/>
            <person name="Yao Z."/>
            <person name="Zhan M."/>
            <person name="Zhang G."/>
            <person name="Chissoe S."/>
            <person name="Murray J."/>
            <person name="Miller N."/>
            <person name="Minx P."/>
            <person name="Fulton R."/>
            <person name="Johnson D."/>
            <person name="Bemis G."/>
            <person name="Bentley D."/>
            <person name="Bradshaw H."/>
            <person name="Bourne S."/>
            <person name="Cordes M."/>
            <person name="Du Z."/>
            <person name="Fulton L."/>
            <person name="Goela D."/>
            <person name="Graves T."/>
            <person name="Hawkins J."/>
            <person name="Hinds K."/>
            <person name="Kemp K."/>
            <person name="Latreille P."/>
            <person name="Layman D."/>
            <person name="Ozersky P."/>
            <person name="Rohlfing T."/>
            <person name="Scheet P."/>
            <person name="Walker C."/>
            <person name="Wamsley A."/>
            <person name="Wohldmann P."/>
            <person name="Pepin K."/>
            <person name="Nelson J."/>
            <person name="Korf I."/>
            <person name="Bedell J.A."/>
            <person name="Hillier L.W."/>
            <person name="Mardis E."/>
            <person name="Waterston R."/>
            <person name="Wilson R."/>
            <person name="Emanuel B.S."/>
            <person name="Shaikh T."/>
            <person name="Kurahashi H."/>
            <person name="Saitta S."/>
            <person name="Budarf M.L."/>
            <person name="McDermid H.E."/>
            <person name="Johnson A."/>
            <person name="Wong A.C.C."/>
            <person name="Morrow B.E."/>
            <person name="Edelmann L."/>
            <person name="Kim U.J."/>
            <person name="Shizuya H."/>
            <person name="Simon M.I."/>
            <person name="Dumanski J.P."/>
            <person name="Peyrard M."/>
            <person name="Kedra D."/>
            <person name="Seroussi E."/>
            <person name="Fransson I."/>
            <person name="Tapia I."/>
            <person name="Bruder C.E."/>
            <person name="O'Brien K.P."/>
            <person name="Wilkinson P."/>
            <person name="Bodenteich A."/>
            <person name="Hartman K."/>
            <person name="Hu X."/>
            <person name="Khan A.S."/>
            <person name="Lane L."/>
            <person name="Tilahun Y."/>
            <person name="Wright H."/>
        </authorList>
    </citation>
    <scope>NUCLEOTIDE SEQUENCE [LARGE SCALE GENOMIC DNA]</scope>
</reference>
<reference key="11">
    <citation type="submission" date="2005-09" db="EMBL/GenBank/DDBJ databases">
        <authorList>
            <person name="Mural R.J."/>
            <person name="Istrail S."/>
            <person name="Sutton G.G."/>
            <person name="Florea L."/>
            <person name="Halpern A.L."/>
            <person name="Mobarry C.M."/>
            <person name="Lippert R."/>
            <person name="Walenz B."/>
            <person name="Shatkay H."/>
            <person name="Dew I."/>
            <person name="Miller J.R."/>
            <person name="Flanigan M.J."/>
            <person name="Edwards N.J."/>
            <person name="Bolanos R."/>
            <person name="Fasulo D."/>
            <person name="Halldorsson B.V."/>
            <person name="Hannenhalli S."/>
            <person name="Turner R."/>
            <person name="Yooseph S."/>
            <person name="Lu F."/>
            <person name="Nusskern D.R."/>
            <person name="Shue B.C."/>
            <person name="Zheng X.H."/>
            <person name="Zhong F."/>
            <person name="Delcher A.L."/>
            <person name="Huson D.H."/>
            <person name="Kravitz S.A."/>
            <person name="Mouchard L."/>
            <person name="Reinert K."/>
            <person name="Remington K.A."/>
            <person name="Clark A.G."/>
            <person name="Waterman M.S."/>
            <person name="Eichler E.E."/>
            <person name="Adams M.D."/>
            <person name="Hunkapiller M.W."/>
            <person name="Myers E.W."/>
            <person name="Venter J.C."/>
        </authorList>
    </citation>
    <scope>NUCLEOTIDE SEQUENCE [LARGE SCALE GENOMIC DNA]</scope>
</reference>
<reference key="12">
    <citation type="journal article" date="2004" name="Genome Res.">
        <title>The status, quality, and expansion of the NIH full-length cDNA project: the Mammalian Gene Collection (MGC).</title>
        <authorList>
            <consortium name="The MGC Project Team"/>
        </authorList>
    </citation>
    <scope>NUCLEOTIDE SEQUENCE [LARGE SCALE MRNA] (ISOFORM 1)</scope>
    <source>
        <tissue>Lung</tissue>
        <tissue>Muscle</tissue>
    </source>
</reference>
<reference key="13">
    <citation type="journal article" date="2008" name="Proc. Natl. Acad. Sci. U.S.A.">
        <title>A quantitative atlas of mitotic phosphorylation.</title>
        <authorList>
            <person name="Dephoure N."/>
            <person name="Zhou C."/>
            <person name="Villen J."/>
            <person name="Beausoleil S.A."/>
            <person name="Bakalarski C.E."/>
            <person name="Elledge S.J."/>
            <person name="Gygi S.P."/>
        </authorList>
    </citation>
    <scope>PHOSPHORYLATION [LARGE SCALE ANALYSIS] AT TYR-130; SER-144 AND SER-148</scope>
    <scope>IDENTIFICATION BY MASS SPECTROMETRY [LARGE SCALE ANALYSIS]</scope>
    <source>
        <tissue>Cervix carcinoma</tissue>
    </source>
</reference>
<reference key="14">
    <citation type="journal article" date="2011" name="BMC Syst. Biol.">
        <title>Initial characterization of the human central proteome.</title>
        <authorList>
            <person name="Burkard T.R."/>
            <person name="Planyavsky M."/>
            <person name="Kaupe I."/>
            <person name="Breitwieser F.P."/>
            <person name="Buerckstuemmer T."/>
            <person name="Bennett K.L."/>
            <person name="Superti-Furga G."/>
            <person name="Colinge J."/>
        </authorList>
    </citation>
    <scope>IDENTIFICATION BY MASS SPECTROMETRY [LARGE SCALE ANALYSIS]</scope>
</reference>
<reference key="15">
    <citation type="journal article" date="2012" name="Proc. Natl. Acad. Sci. U.S.A.">
        <title>N-terminal acetylome analyses and functional insights of the N-terminal acetyltransferase NatB.</title>
        <authorList>
            <person name="Van Damme P."/>
            <person name="Lasa M."/>
            <person name="Polevoda B."/>
            <person name="Gazquez C."/>
            <person name="Elosegui-Artola A."/>
            <person name="Kim D.S."/>
            <person name="De Juan-Pardo E."/>
            <person name="Demeyer K."/>
            <person name="Hole K."/>
            <person name="Larrea E."/>
            <person name="Timmerman E."/>
            <person name="Prieto J."/>
            <person name="Arnesen T."/>
            <person name="Sherman F."/>
            <person name="Gevaert K."/>
            <person name="Aldabe R."/>
        </authorList>
    </citation>
    <scope>IDENTIFICATION BY MASS SPECTROMETRY [LARGE SCALE ANALYSIS]</scope>
</reference>
<reference key="16">
    <citation type="journal article" date="2015" name="Exp. Cell Res.">
        <title>Human DNA helicase B interacts with the replication initiation protein Cdc45 and facilitates Cdc45 binding onto chromatin.</title>
        <authorList>
            <person name="Gerhardt J."/>
            <person name="Guler G.D."/>
            <person name="Fanning E."/>
        </authorList>
    </citation>
    <scope>FUNCTION</scope>
    <scope>INTERACTION WITH HELB</scope>
</reference>
<reference key="17">
    <citation type="journal article" date="2022" name="Nature">
        <title>Fast and efficient DNA replication with purified human proteins.</title>
        <authorList>
            <person name="Baris Y."/>
            <person name="Taylor M.R.G."/>
            <person name="Aria V."/>
            <person name="Yeeles J.T.P."/>
        </authorList>
    </citation>
    <scope>FUNCTION</scope>
</reference>
<reference evidence="13 14" key="18">
    <citation type="journal article" date="2020" name="Nucleic Acids Res.">
        <title>CryoEM structures of human CMG-ATPgammaS-DNA and CMG-AND-1 complexes.</title>
        <authorList>
            <person name="Rzechorzek N.J."/>
            <person name="Hardwick S.W."/>
            <person name="Jatikusumo V.A."/>
            <person name="Chirgadze D.Y."/>
            <person name="Pellegrini L."/>
        </authorList>
    </citation>
    <scope>STRUCTURE BY ELECTRON MICROSCOPY (3.29 ANGSTROMS) IN CMG COMPLEX</scope>
    <scope>SUBUNIT</scope>
    <scope>FUNCTION</scope>
</reference>
<reference evidence="15" key="19">
    <citation type="journal article" date="2021" name="EMBO J.">
        <title>Structure of a human replisome shows the organisation and interactions of a DNA replication machine.</title>
        <authorList>
            <person name="Jones M.L."/>
            <person name="Baris Y."/>
            <person name="Taylor M.R.G."/>
            <person name="Yeeles J.T.P."/>
        </authorList>
    </citation>
    <scope>STRUCTURE BY ELECTRON MICROSCOPY (3.20 ANGSTROMS) IN REPLISOME</scope>
    <scope>SUBUNIT</scope>
    <scope>FUNCTION</scope>
</reference>
<reference evidence="16" key="20">
    <citation type="journal article" date="2021" name="Nature">
        <title>A conserved mechanism for regulating replisome disassembly in eukaryotes.</title>
        <authorList>
            <person name="Jenkyn-Bedford M."/>
            <person name="Jones M.L."/>
            <person name="Baris Y."/>
            <person name="Labib K.P.M."/>
            <person name="Cannone G."/>
            <person name="Yeeles J.T.P."/>
            <person name="Deegan T.D."/>
        </authorList>
    </citation>
    <scope>STRUCTURE BY ELECTRON MICROSCOPY (2.80 ANGSTROMS) IN REPLISOME</scope>
    <scope>SUBUNIT</scope>
    <scope>FUNCTION</scope>
</reference>
<reference key="21">
    <citation type="journal article" date="2016" name="Am. J. Hum. Genet.">
        <title>Mutations in CDC45, encoding an essential component of the pre-initiation complex, cause Meier-Gorlin syndrome and craniosynostosis.</title>
        <authorList>
            <consortium name="WGS500 Consortium"/>
            <person name="Fenwick A.L."/>
            <person name="Kliszczak M."/>
            <person name="Cooper F."/>
            <person name="Murray J."/>
            <person name="Sanchez-Pulido L."/>
            <person name="Twigg S.R."/>
            <person name="Goriely A."/>
            <person name="McGowan S.J."/>
            <person name="Miller K.A."/>
            <person name="Taylor I.B."/>
            <person name="Logan C."/>
            <person name="Bozdogan S."/>
            <person name="Danda S."/>
            <person name="Dixon J."/>
            <person name="Elsayed S.M."/>
            <person name="Elsobky E."/>
            <person name="Gardham A."/>
            <person name="Hoffer M.J."/>
            <person name="Koopmans M."/>
            <person name="McDonald-McGinn D.M."/>
            <person name="Santen G.W."/>
            <person name="Savarirayan R."/>
            <person name="de Silva D."/>
            <person name="Vanakker O."/>
            <person name="Wall S.A."/>
            <person name="Wilson L.C."/>
            <person name="Yuregir O.O."/>
            <person name="Zackai E.H."/>
            <person name="Ponting C.P."/>
            <person name="Jackson A.P."/>
            <person name="Wilkie A.O."/>
            <person name="Niedzwiedz W."/>
            <person name="Bicknell L.S."/>
        </authorList>
    </citation>
    <scope>INVOLVEMENT IN MGORS7</scope>
    <scope>VARIANTS MGORS7 ARG-68; HIS-76; GLY-155; CYS-157; GLY-226; TYR-264; VAL-298; THR-321; 424-ARG--SER-566 DEL; LEU-463; LEU-496 AND TRP-554</scope>
    <scope>CHARACTERIZATION OF VARIANTS MGORS7 ARG-68; HIS-76; CYS-157; GLY-226 AND VAL-298</scope>
</reference>
<sequence length="566" mass="65569">MFVSDFRKEFYEVVQSQRVLLFVASDVDALCACKILQALFQCDHVQYTLVPVSGWQELETAFLEHKEQFHYFILINCGANVDLLDILQPDEDTIFFVCDTHRPVNVVNVYNDTQIKLLIKQDDDLEVPAYEDIFRDEEEDEEHSGNDSDGSEPSEKRTRLEEEIVEQTMRRRQRREWEARRRDILFDYEQYEYHGTSSAMVMFELAWMLSKDLNDMLWWAIVGLTDQWVQDKITQMKYVTDVGVLQRHVSRHNHRNEDEENTLSVDCTRISFEYDLRLVLYQHWSLHDSLCNTSYTAARFKLWSVHGQKRLQEFLADMGLPLKQVKQKFQAMDISLKENLREMIEESANKFGMKDMRVQTFSIHFGFKHKFLASDVVFATMSLMESPEKDGSGTDHFIQALDSLSRSNLDKLYHGLELAKKQLRATQQTIASCLCTNLVISQGPFLYCSLMEGTPDVMLFSRPASLSLLSKHLLKSFVCSTKNRRCKLLPLVMAAPLSMEHGTVTVVGIPPETDSSDRKNFFGRAFEKAAESTSSRMLHNHFDLSVIELKAEDRSKFLDALISLLS</sequence>